<dbReference type="EMBL" id="CP001120">
    <property type="protein sequence ID" value="ACF67753.1"/>
    <property type="molecule type" value="Genomic_DNA"/>
</dbReference>
<dbReference type="RefSeq" id="WP_000801129.1">
    <property type="nucleotide sequence ID" value="NC_011083.1"/>
</dbReference>
<dbReference type="SMR" id="B4T8Q9"/>
<dbReference type="GeneID" id="89550189"/>
<dbReference type="KEGG" id="seh:SeHA_C0520"/>
<dbReference type="HOGENOM" id="CLU_087843_4_1_6"/>
<dbReference type="Proteomes" id="UP000001866">
    <property type="component" value="Chromosome"/>
</dbReference>
<dbReference type="GO" id="GO:0005829">
    <property type="term" value="C:cytosol"/>
    <property type="evidence" value="ECO:0007669"/>
    <property type="project" value="TreeGrafter"/>
</dbReference>
<dbReference type="GO" id="GO:0003723">
    <property type="term" value="F:RNA binding"/>
    <property type="evidence" value="ECO:0007669"/>
    <property type="project" value="UniProtKB-UniRule"/>
</dbReference>
<dbReference type="GO" id="GO:0006353">
    <property type="term" value="P:DNA-templated transcription termination"/>
    <property type="evidence" value="ECO:0007669"/>
    <property type="project" value="UniProtKB-UniRule"/>
</dbReference>
<dbReference type="GO" id="GO:0031564">
    <property type="term" value="P:transcription antitermination"/>
    <property type="evidence" value="ECO:0007669"/>
    <property type="project" value="UniProtKB-KW"/>
</dbReference>
<dbReference type="CDD" id="cd00619">
    <property type="entry name" value="Terminator_NusB"/>
    <property type="match status" value="1"/>
</dbReference>
<dbReference type="FunFam" id="1.10.940.10:FF:000001">
    <property type="entry name" value="Transcription antitermination factor NusB"/>
    <property type="match status" value="1"/>
</dbReference>
<dbReference type="Gene3D" id="1.10.940.10">
    <property type="entry name" value="NusB-like"/>
    <property type="match status" value="1"/>
</dbReference>
<dbReference type="HAMAP" id="MF_00073">
    <property type="entry name" value="NusB"/>
    <property type="match status" value="1"/>
</dbReference>
<dbReference type="InterPro" id="IPR035926">
    <property type="entry name" value="NusB-like_sf"/>
</dbReference>
<dbReference type="InterPro" id="IPR011605">
    <property type="entry name" value="NusB_fam"/>
</dbReference>
<dbReference type="InterPro" id="IPR006027">
    <property type="entry name" value="NusB_RsmB_TIM44"/>
</dbReference>
<dbReference type="NCBIfam" id="TIGR01951">
    <property type="entry name" value="nusB"/>
    <property type="match status" value="1"/>
</dbReference>
<dbReference type="PANTHER" id="PTHR11078:SF3">
    <property type="entry name" value="ANTITERMINATION NUSB DOMAIN-CONTAINING PROTEIN"/>
    <property type="match status" value="1"/>
</dbReference>
<dbReference type="PANTHER" id="PTHR11078">
    <property type="entry name" value="N UTILIZATION SUBSTANCE PROTEIN B-RELATED"/>
    <property type="match status" value="1"/>
</dbReference>
<dbReference type="Pfam" id="PF01029">
    <property type="entry name" value="NusB"/>
    <property type="match status" value="1"/>
</dbReference>
<dbReference type="SUPFAM" id="SSF48013">
    <property type="entry name" value="NusB-like"/>
    <property type="match status" value="1"/>
</dbReference>
<sequence length="139" mass="15689">MKPAARRRARECAVQALYSWQLSQNDIADVEYQFLAEQDVKDVDVLYFRELLSGVATNSAYLDGLMKPYLSRLLEELGQVEKAVLRIALFELSKRSDVPYKVAINEAIELAKTFGAEDSHKFVNGVLDKAAPVIRPNKK</sequence>
<gene>
    <name evidence="1" type="primary">nusB</name>
    <name type="ordered locus">SeHA_C0520</name>
</gene>
<protein>
    <recommendedName>
        <fullName evidence="1">Transcription antitermination protein NusB</fullName>
    </recommendedName>
    <alternativeName>
        <fullName evidence="1">Antitermination factor NusB</fullName>
    </alternativeName>
</protein>
<feature type="chain" id="PRO_1000092583" description="Transcription antitermination protein NusB">
    <location>
        <begin position="1"/>
        <end position="139"/>
    </location>
</feature>
<organism>
    <name type="scientific">Salmonella heidelberg (strain SL476)</name>
    <dbReference type="NCBI Taxonomy" id="454169"/>
    <lineage>
        <taxon>Bacteria</taxon>
        <taxon>Pseudomonadati</taxon>
        <taxon>Pseudomonadota</taxon>
        <taxon>Gammaproteobacteria</taxon>
        <taxon>Enterobacterales</taxon>
        <taxon>Enterobacteriaceae</taxon>
        <taxon>Salmonella</taxon>
    </lineage>
</organism>
<accession>B4T8Q9</accession>
<evidence type="ECO:0000255" key="1">
    <source>
        <dbReference type="HAMAP-Rule" id="MF_00073"/>
    </source>
</evidence>
<proteinExistence type="inferred from homology"/>
<comment type="function">
    <text evidence="1">Involved in transcription antitermination. Required for transcription of ribosomal RNA (rRNA) genes. Binds specifically to the boxA antiterminator sequence of the ribosomal RNA (rrn) operons.</text>
</comment>
<comment type="similarity">
    <text evidence="1">Belongs to the NusB family.</text>
</comment>
<keyword id="KW-0694">RNA-binding</keyword>
<keyword id="KW-0804">Transcription</keyword>
<keyword id="KW-0889">Transcription antitermination</keyword>
<keyword id="KW-0805">Transcription regulation</keyword>
<reference key="1">
    <citation type="journal article" date="2011" name="J. Bacteriol.">
        <title>Comparative genomics of 28 Salmonella enterica isolates: evidence for CRISPR-mediated adaptive sublineage evolution.</title>
        <authorList>
            <person name="Fricke W.F."/>
            <person name="Mammel M.K."/>
            <person name="McDermott P.F."/>
            <person name="Tartera C."/>
            <person name="White D.G."/>
            <person name="Leclerc J.E."/>
            <person name="Ravel J."/>
            <person name="Cebula T.A."/>
        </authorList>
    </citation>
    <scope>NUCLEOTIDE SEQUENCE [LARGE SCALE GENOMIC DNA]</scope>
    <source>
        <strain>SL476</strain>
    </source>
</reference>
<name>NUSB_SALHS</name>